<name>FER_MYCTO</name>
<keyword id="KW-0003">3Fe-4S</keyword>
<keyword id="KW-0004">4Fe-4S</keyword>
<keyword id="KW-0249">Electron transport</keyword>
<keyword id="KW-0408">Iron</keyword>
<keyword id="KW-0411">Iron-sulfur</keyword>
<keyword id="KW-0479">Metal-binding</keyword>
<keyword id="KW-1185">Reference proteome</keyword>
<keyword id="KW-0677">Repeat</keyword>
<keyword id="KW-0813">Transport</keyword>
<proteinExistence type="evidence at transcript level"/>
<dbReference type="EMBL" id="AE000516">
    <property type="protein sequence ID" value="AAK46340.1"/>
    <property type="molecule type" value="Genomic_DNA"/>
</dbReference>
<dbReference type="PIR" id="E70759">
    <property type="entry name" value="E70759"/>
</dbReference>
<dbReference type="RefSeq" id="WP_003410065.1">
    <property type="nucleotide sequence ID" value="NZ_KK341227.1"/>
</dbReference>
<dbReference type="SMR" id="P9WNE6"/>
<dbReference type="GeneID" id="45425987"/>
<dbReference type="KEGG" id="mtc:MT2063"/>
<dbReference type="PATRIC" id="fig|83331.31.peg.2221"/>
<dbReference type="HOGENOM" id="CLU_139698_0_3_11"/>
<dbReference type="Proteomes" id="UP000001020">
    <property type="component" value="Chromosome"/>
</dbReference>
<dbReference type="GO" id="GO:0051538">
    <property type="term" value="F:3 iron, 4 sulfur cluster binding"/>
    <property type="evidence" value="ECO:0007669"/>
    <property type="project" value="UniProtKB-KW"/>
</dbReference>
<dbReference type="GO" id="GO:0051539">
    <property type="term" value="F:4 iron, 4 sulfur cluster binding"/>
    <property type="evidence" value="ECO:0007669"/>
    <property type="project" value="UniProtKB-KW"/>
</dbReference>
<dbReference type="GO" id="GO:0009055">
    <property type="term" value="F:electron transfer activity"/>
    <property type="evidence" value="ECO:0007669"/>
    <property type="project" value="InterPro"/>
</dbReference>
<dbReference type="GO" id="GO:0046872">
    <property type="term" value="F:metal ion binding"/>
    <property type="evidence" value="ECO:0007669"/>
    <property type="project" value="UniProtKB-KW"/>
</dbReference>
<dbReference type="FunFam" id="3.30.70.20:FF:000048">
    <property type="entry name" value="Ferredoxin"/>
    <property type="match status" value="1"/>
</dbReference>
<dbReference type="Gene3D" id="3.30.70.20">
    <property type="match status" value="1"/>
</dbReference>
<dbReference type="InterPro" id="IPR017896">
    <property type="entry name" value="4Fe4S_Fe-S-bd"/>
</dbReference>
<dbReference type="InterPro" id="IPR000813">
    <property type="entry name" value="7Fe_ferredoxin"/>
</dbReference>
<dbReference type="InterPro" id="IPR054830">
    <property type="entry name" value="FdxA_Actino"/>
</dbReference>
<dbReference type="InterPro" id="IPR050294">
    <property type="entry name" value="RnfB_subfamily"/>
</dbReference>
<dbReference type="NCBIfam" id="NF045480">
    <property type="entry name" value="FdxA_Actino"/>
    <property type="match status" value="1"/>
</dbReference>
<dbReference type="PANTHER" id="PTHR42859:SF2">
    <property type="entry name" value="FERREDOXIN"/>
    <property type="match status" value="1"/>
</dbReference>
<dbReference type="PANTHER" id="PTHR42859">
    <property type="entry name" value="OXIDOREDUCTASE"/>
    <property type="match status" value="1"/>
</dbReference>
<dbReference type="Pfam" id="PF00037">
    <property type="entry name" value="Fer4"/>
    <property type="match status" value="1"/>
</dbReference>
<dbReference type="PRINTS" id="PR00354">
    <property type="entry name" value="7FE8SFRDOXIN"/>
</dbReference>
<dbReference type="SUPFAM" id="SSF54862">
    <property type="entry name" value="4Fe-4S ferredoxins"/>
    <property type="match status" value="1"/>
</dbReference>
<dbReference type="PROSITE" id="PS51379">
    <property type="entry name" value="4FE4S_FER_2"/>
    <property type="match status" value="1"/>
</dbReference>
<evidence type="ECO:0000250" key="1"/>
<evidence type="ECO:0000255" key="2">
    <source>
        <dbReference type="PROSITE-ProRule" id="PRU00711"/>
    </source>
</evidence>
<evidence type="ECO:0000269" key="3">
    <source>
    </source>
</evidence>
<reference key="1">
    <citation type="journal article" date="2002" name="J. Bacteriol.">
        <title>Whole-genome comparison of Mycobacterium tuberculosis clinical and laboratory strains.</title>
        <authorList>
            <person name="Fleischmann R.D."/>
            <person name="Alland D."/>
            <person name="Eisen J.A."/>
            <person name="Carpenter L."/>
            <person name="White O."/>
            <person name="Peterson J.D."/>
            <person name="DeBoy R.T."/>
            <person name="Dodson R.J."/>
            <person name="Gwinn M.L."/>
            <person name="Haft D.H."/>
            <person name="Hickey E.K."/>
            <person name="Kolonay J.F."/>
            <person name="Nelson W.C."/>
            <person name="Umayam L.A."/>
            <person name="Ermolaeva M.D."/>
            <person name="Salzberg S.L."/>
            <person name="Delcher A."/>
            <person name="Utterback T.R."/>
            <person name="Weidman J.F."/>
            <person name="Khouri H.M."/>
            <person name="Gill J."/>
            <person name="Mikula A."/>
            <person name="Bishai W."/>
            <person name="Jacobs W.R. Jr."/>
            <person name="Venter J.C."/>
            <person name="Fraser C.M."/>
        </authorList>
    </citation>
    <scope>NUCLEOTIDE SEQUENCE [LARGE SCALE GENOMIC DNA]</scope>
    <source>
        <strain>CDC 1551 / Oshkosh</strain>
    </source>
</reference>
<reference key="2">
    <citation type="journal article" date="2003" name="J. Exp. Med.">
        <title>Inhibition of respiration by nitric oxide induces a Mycobacterium tuberculosis dormancy program.</title>
        <authorList>
            <person name="Voskuil M.I."/>
            <person name="Schnappinger D."/>
            <person name="Visconti K.C."/>
            <person name="Harrell M.I."/>
            <person name="Dolganov G.M."/>
            <person name="Sherman D.R."/>
            <person name="Schoolnik G.K."/>
        </authorList>
    </citation>
    <scope>INDUCTION BY NITRIC OXIDE (NO); BY HYPOXIA; IN MOUSE MODEL AND DORMANCY REGULON</scope>
    <source>
        <strain>CDC 1551 / Oshkosh</strain>
    </source>
</reference>
<sequence length="114" mass="12064">MTYVIGSECVDVMDKSCVQECPVDCIYEGARMLYINPDECVDCGACKPACRVEAIYWEGDLPDDQHQHLGDNAAFFHQVLPGRVAPLGSPGGAAAVGPIGVDTPLVAAIPVECP</sequence>
<comment type="function">
    <text evidence="1">Ferredoxins are iron-sulfur proteins that transfer electrons in a wide variety of metabolic reactions.</text>
</comment>
<comment type="cofactor">
    <cofactor evidence="1">
        <name>[4Fe-4S] cluster</name>
        <dbReference type="ChEBI" id="CHEBI:49883"/>
    </cofactor>
    <text evidence="1">Binds 1 [4Fe-4S] cluster.</text>
</comment>
<comment type="cofactor">
    <cofactor evidence="1">
        <name>[3Fe-4S] cluster</name>
        <dbReference type="ChEBI" id="CHEBI:21137"/>
    </cofactor>
    <text evidence="1">Binds 1 [3Fe-4S] cluster.</text>
</comment>
<comment type="induction">
    <text evidence="3">A member of the dormancy regulon. Induced in response to reduced oxygen tension (hypoxia) and low levels of nitric oxide (NO).</text>
</comment>
<organism>
    <name type="scientific">Mycobacterium tuberculosis (strain CDC 1551 / Oshkosh)</name>
    <dbReference type="NCBI Taxonomy" id="83331"/>
    <lineage>
        <taxon>Bacteria</taxon>
        <taxon>Bacillati</taxon>
        <taxon>Actinomycetota</taxon>
        <taxon>Actinomycetes</taxon>
        <taxon>Mycobacteriales</taxon>
        <taxon>Mycobacteriaceae</taxon>
        <taxon>Mycobacterium</taxon>
        <taxon>Mycobacterium tuberculosis complex</taxon>
    </lineage>
</organism>
<accession>P9WNE6</accession>
<accession>L0TB85</accession>
<accession>P64122</accession>
<accession>Q10839</accession>
<protein>
    <recommendedName>
        <fullName>Ferredoxin</fullName>
    </recommendedName>
</protein>
<feature type="initiator methionine" description="Removed" evidence="1">
    <location>
        <position position="1"/>
    </location>
</feature>
<feature type="chain" id="PRO_0000427140" description="Ferredoxin">
    <location>
        <begin position="2"/>
        <end position="114"/>
    </location>
</feature>
<feature type="domain" description="4Fe-4S ferredoxin-type" evidence="2">
    <location>
        <begin position="31"/>
        <end position="60"/>
    </location>
</feature>
<feature type="binding site" evidence="1">
    <location>
        <position position="9"/>
    </location>
    <ligand>
        <name>[3Fe-4S] cluster</name>
        <dbReference type="ChEBI" id="CHEBI:21137"/>
    </ligand>
</feature>
<feature type="binding site" evidence="1">
    <location>
        <position position="17"/>
    </location>
    <ligand>
        <name>[3Fe-4S] cluster</name>
        <dbReference type="ChEBI" id="CHEBI:21137"/>
    </ligand>
</feature>
<feature type="binding site" evidence="1">
    <location>
        <position position="21"/>
    </location>
    <ligand>
        <name>[4Fe-4S] cluster</name>
        <dbReference type="ChEBI" id="CHEBI:49883"/>
    </ligand>
</feature>
<feature type="binding site" evidence="1">
    <location>
        <position position="40"/>
    </location>
    <ligand>
        <name>[4Fe-4S] cluster</name>
        <dbReference type="ChEBI" id="CHEBI:49883"/>
    </ligand>
</feature>
<feature type="binding site" evidence="1">
    <location>
        <position position="43"/>
    </location>
    <ligand>
        <name>[4Fe-4S] cluster</name>
        <dbReference type="ChEBI" id="CHEBI:49883"/>
    </ligand>
</feature>
<feature type="binding site" evidence="1">
    <location>
        <position position="46"/>
    </location>
    <ligand>
        <name>[4Fe-4S] cluster</name>
        <dbReference type="ChEBI" id="CHEBI:49883"/>
    </ligand>
</feature>
<feature type="binding site" evidence="1">
    <location>
        <position position="50"/>
    </location>
    <ligand>
        <name>[3Fe-4S] cluster</name>
        <dbReference type="ChEBI" id="CHEBI:21137"/>
    </ligand>
</feature>
<gene>
    <name type="primary">fdxA</name>
    <name type="ordered locus">MT2063</name>
</gene>